<accession>P49676</accession>
<sequence>MKMKQFNLLSLFLILITSFGSANSTIVSHDERAITIDGQRRILLSGSIHYPRSTSDMWPDLISKAKDGGLDTIETYVFWNAHEPSRRQYDFSGNLDLVRFIKTIQSAGLYSVLRIGPYVCAEWNYGGFPVWLHNMPDMKFRTINPGFMNEMQNFTTKIVNMMKEESLFASQGGPIILAQIENEYGNVISSYGAEGKAYIDWCANMANSLDIGVPWIMCQQPHAPQPMIETCNGFYCDQYKPSNPSSPKMWTENWTGWFKNWGGKHPYRTAEDLAFSVARFFQTGGTFQNYYMYHGGTNFGRVAGGPYITTSYDYDAPLDEYGNLNQPKWGHLKQLHTLLKSMEKPLTYGNISTIDLGNSVTATVYSTNEKSSCFIGNVNATADALVNFKGKDYNVPAWSVSVLPDCDKEAYNTARVNTQTSIITEDSCDEPEKLKWTWRPEFTTQKTILKGSGDLIAKGLVDQKDVTNDASDYLWYMTRVHLDKKDPIWSRNMSLRVHSNAHVLHAYVNGKYVGNQIVRDNKFDYRFEKKVNLVHGTNHLALLSVSVGLQNYGPFFESGPTGINGPVKLVGYKGDETIEKDLSKHQWDYKIGLNGFNHKLFSMKSAGHHHRKWSTEKLPADRMLSWYKANFKAPLGKDPVIVDLNGLGKGEVWINGQSIGRYWPSFNSSDEGCTEECDYRGEYGSDKCAFMCGKPTQRWYHVPRSFLNDKGHNTITLFEEMGGDPSMVKFKTVVTGRVCAKAHEHNKVELSCNNRPISAVKFASFGNPSGQCGSFAAGSCEGAKDAVKVVAKECVGKLNCTMNVSSHKFGSNLDCGDSPKRLFVEVEC</sequence>
<organism>
    <name type="scientific">Brassica oleracea</name>
    <name type="common">Wild cabbage</name>
    <dbReference type="NCBI Taxonomy" id="3712"/>
    <lineage>
        <taxon>Eukaryota</taxon>
        <taxon>Viridiplantae</taxon>
        <taxon>Streptophyta</taxon>
        <taxon>Embryophyta</taxon>
        <taxon>Tracheophyta</taxon>
        <taxon>Spermatophyta</taxon>
        <taxon>Magnoliopsida</taxon>
        <taxon>eudicotyledons</taxon>
        <taxon>Gunneridae</taxon>
        <taxon>Pentapetalae</taxon>
        <taxon>rosids</taxon>
        <taxon>malvids</taxon>
        <taxon>Brassicales</taxon>
        <taxon>Brassicaceae</taxon>
        <taxon>Brassiceae</taxon>
        <taxon>Brassica</taxon>
    </lineage>
</organism>
<keyword id="KW-0052">Apoplast</keyword>
<keyword id="KW-0325">Glycoprotein</keyword>
<keyword id="KW-0326">Glycosidase</keyword>
<keyword id="KW-0378">Hydrolase</keyword>
<keyword id="KW-0964">Secreted</keyword>
<keyword id="KW-0732">Signal</keyword>
<dbReference type="EC" id="3.2.1.23"/>
<dbReference type="EMBL" id="X84684">
    <property type="protein sequence ID" value="CAA59162.1"/>
    <property type="molecule type" value="mRNA"/>
</dbReference>
<dbReference type="PIR" id="S52393">
    <property type="entry name" value="S52393"/>
</dbReference>
<dbReference type="SMR" id="P49676"/>
<dbReference type="CAZy" id="GH35">
    <property type="family name" value="Glycoside Hydrolase Family 35"/>
</dbReference>
<dbReference type="GO" id="GO:0048046">
    <property type="term" value="C:apoplast"/>
    <property type="evidence" value="ECO:0007669"/>
    <property type="project" value="UniProtKB-SubCell"/>
</dbReference>
<dbReference type="GO" id="GO:0004565">
    <property type="term" value="F:beta-galactosidase activity"/>
    <property type="evidence" value="ECO:0007669"/>
    <property type="project" value="UniProtKB-EC"/>
</dbReference>
<dbReference type="GO" id="GO:0030246">
    <property type="term" value="F:carbohydrate binding"/>
    <property type="evidence" value="ECO:0007669"/>
    <property type="project" value="InterPro"/>
</dbReference>
<dbReference type="GO" id="GO:0005975">
    <property type="term" value="P:carbohydrate metabolic process"/>
    <property type="evidence" value="ECO:0007669"/>
    <property type="project" value="InterPro"/>
</dbReference>
<dbReference type="CDD" id="cd22842">
    <property type="entry name" value="Gal_Rha_Lectin_BGal"/>
    <property type="match status" value="1"/>
</dbReference>
<dbReference type="FunFam" id="2.60.120.260:FF:000097">
    <property type="entry name" value="Beta-galactosidase"/>
    <property type="match status" value="1"/>
</dbReference>
<dbReference type="FunFam" id="2.60.120.260:FF:000142">
    <property type="entry name" value="Beta-galactosidase"/>
    <property type="match status" value="1"/>
</dbReference>
<dbReference type="FunFam" id="3.20.20.80:FF:000098">
    <property type="entry name" value="Beta-galactosidase"/>
    <property type="match status" value="1"/>
</dbReference>
<dbReference type="Gene3D" id="2.60.120.740">
    <property type="match status" value="1"/>
</dbReference>
<dbReference type="Gene3D" id="2.60.120.260">
    <property type="entry name" value="Galactose-binding domain-like"/>
    <property type="match status" value="2"/>
</dbReference>
<dbReference type="Gene3D" id="3.20.20.80">
    <property type="entry name" value="Glycosidases"/>
    <property type="match status" value="1"/>
</dbReference>
<dbReference type="InterPro" id="IPR048913">
    <property type="entry name" value="BetaGal_gal-bd"/>
</dbReference>
<dbReference type="InterPro" id="IPR008979">
    <property type="entry name" value="Galactose-bd-like_sf"/>
</dbReference>
<dbReference type="InterPro" id="IPR041392">
    <property type="entry name" value="GHD"/>
</dbReference>
<dbReference type="InterPro" id="IPR031330">
    <property type="entry name" value="Gly_Hdrlase_35_cat"/>
</dbReference>
<dbReference type="InterPro" id="IPR019801">
    <property type="entry name" value="Glyco_hydro_35_CS"/>
</dbReference>
<dbReference type="InterPro" id="IPR001944">
    <property type="entry name" value="Glycoside_Hdrlase_35"/>
</dbReference>
<dbReference type="InterPro" id="IPR017853">
    <property type="entry name" value="Glycoside_hydrolase_SF"/>
</dbReference>
<dbReference type="InterPro" id="IPR000922">
    <property type="entry name" value="Lectin_gal-bd_dom"/>
</dbReference>
<dbReference type="InterPro" id="IPR043159">
    <property type="entry name" value="Lectin_gal-bd_sf"/>
</dbReference>
<dbReference type="PANTHER" id="PTHR23421">
    <property type="entry name" value="BETA-GALACTOSIDASE RELATED"/>
    <property type="match status" value="1"/>
</dbReference>
<dbReference type="Pfam" id="PF21467">
    <property type="entry name" value="BetaGal_gal-bd"/>
    <property type="match status" value="1"/>
</dbReference>
<dbReference type="Pfam" id="PF17834">
    <property type="entry name" value="GHD"/>
    <property type="match status" value="1"/>
</dbReference>
<dbReference type="Pfam" id="PF01301">
    <property type="entry name" value="Glyco_hydro_35"/>
    <property type="match status" value="1"/>
</dbReference>
<dbReference type="Pfam" id="PF02140">
    <property type="entry name" value="SUEL_Lectin"/>
    <property type="match status" value="1"/>
</dbReference>
<dbReference type="PRINTS" id="PR00742">
    <property type="entry name" value="GLHYDRLASE35"/>
</dbReference>
<dbReference type="SUPFAM" id="SSF51445">
    <property type="entry name" value="(Trans)glycosidases"/>
    <property type="match status" value="1"/>
</dbReference>
<dbReference type="SUPFAM" id="SSF49785">
    <property type="entry name" value="Galactose-binding domain-like"/>
    <property type="match status" value="2"/>
</dbReference>
<dbReference type="PROSITE" id="PS01182">
    <property type="entry name" value="GLYCOSYL_HYDROL_F35"/>
    <property type="match status" value="1"/>
</dbReference>
<dbReference type="PROSITE" id="PS50228">
    <property type="entry name" value="SUEL_LECTIN"/>
    <property type="match status" value="1"/>
</dbReference>
<feature type="signal peptide" evidence="1">
    <location>
        <begin position="1"/>
        <end position="20"/>
    </location>
</feature>
<feature type="chain" id="PRO_0000012194" description="Beta-galactosidase">
    <location>
        <begin position="21"/>
        <end position="828"/>
    </location>
</feature>
<feature type="domain" description="SUEL-type lectin" evidence="2">
    <location>
        <begin position="742"/>
        <end position="828"/>
    </location>
</feature>
<feature type="active site" description="Proton donor" evidence="1">
    <location>
        <position position="183"/>
    </location>
</feature>
<feature type="active site" description="Nucleophile" evidence="1">
    <location>
        <position position="252"/>
    </location>
</feature>
<feature type="glycosylation site" description="N-linked (GlcNAc...) asparagine" evidence="1">
    <location>
        <position position="23"/>
    </location>
</feature>
<feature type="glycosylation site" description="N-linked (GlcNAc...) asparagine" evidence="1">
    <location>
        <position position="153"/>
    </location>
</feature>
<feature type="glycosylation site" description="N-linked (GlcNAc...) asparagine" evidence="1">
    <location>
        <position position="253"/>
    </location>
</feature>
<feature type="glycosylation site" description="N-linked (GlcNAc...) asparagine" evidence="1">
    <location>
        <position position="350"/>
    </location>
</feature>
<feature type="glycosylation site" description="N-linked (GlcNAc...) asparagine" evidence="1">
    <location>
        <position position="379"/>
    </location>
</feature>
<feature type="glycosylation site" description="N-linked (GlcNAc...) asparagine" evidence="1">
    <location>
        <position position="492"/>
    </location>
</feature>
<feature type="glycosylation site" description="N-linked (GlcNAc...) asparagine" evidence="1">
    <location>
        <position position="667"/>
    </location>
</feature>
<feature type="glycosylation site" description="N-linked (GlcNAc...) asparagine" evidence="1">
    <location>
        <position position="799"/>
    </location>
</feature>
<feature type="glycosylation site" description="N-linked (GlcNAc...) asparagine" evidence="1">
    <location>
        <position position="803"/>
    </location>
</feature>
<reference key="1">
    <citation type="online journal article" date="1995" name="Plant Gene Register">
        <title>A beta-galactosidase cDNA homolog from broccoli (Brassica oleracea L.).</title>
        <authorList>
            <person name="Downs C.G."/>
            <person name="Almira E.C."/>
        </authorList>
        <locator>PGR95-017</locator>
    </citation>
    <scope>NUCLEOTIDE SEQUENCE [MRNA]</scope>
    <source>
        <strain>cv. Shogun</strain>
        <tissue>Floret</tissue>
    </source>
</reference>
<proteinExistence type="evidence at transcript level"/>
<name>BGAL_BRAOL</name>
<comment type="catalytic activity">
    <reaction>
        <text>Hydrolysis of terminal non-reducing beta-D-galactose residues in beta-D-galactosides.</text>
        <dbReference type="EC" id="3.2.1.23"/>
    </reaction>
</comment>
<comment type="subcellular location">
    <subcellularLocation>
        <location evidence="3">Secreted</location>
        <location evidence="3">Extracellular space</location>
        <location evidence="3">Apoplast</location>
    </subcellularLocation>
</comment>
<comment type="similarity">
    <text evidence="3">Belongs to the glycosyl hydrolase 35 family.</text>
</comment>
<protein>
    <recommendedName>
        <fullName>Beta-galactosidase</fullName>
        <shortName>Lactase</shortName>
        <ecNumber>3.2.1.23</ecNumber>
    </recommendedName>
</protein>
<evidence type="ECO:0000255" key="1"/>
<evidence type="ECO:0000255" key="2">
    <source>
        <dbReference type="PROSITE-ProRule" id="PRU00260"/>
    </source>
</evidence>
<evidence type="ECO:0000305" key="3"/>